<evidence type="ECO:0000255" key="1">
    <source>
        <dbReference type="HAMAP-Rule" id="MF_00226"/>
    </source>
</evidence>
<protein>
    <recommendedName>
        <fullName evidence="1">Putative competence-damage inducible protein</fullName>
    </recommendedName>
</protein>
<gene>
    <name evidence="1" type="primary">cinA</name>
    <name type="ordered locus">BC_3780</name>
</gene>
<keyword id="KW-1185">Reference proteome</keyword>
<organism>
    <name type="scientific">Bacillus cereus (strain ATCC 14579 / DSM 31 / CCUG 7414 / JCM 2152 / NBRC 15305 / NCIMB 9373 / NCTC 2599 / NRRL B-3711)</name>
    <dbReference type="NCBI Taxonomy" id="226900"/>
    <lineage>
        <taxon>Bacteria</taxon>
        <taxon>Bacillati</taxon>
        <taxon>Bacillota</taxon>
        <taxon>Bacilli</taxon>
        <taxon>Bacillales</taxon>
        <taxon>Bacillaceae</taxon>
        <taxon>Bacillus</taxon>
        <taxon>Bacillus cereus group</taxon>
    </lineage>
</organism>
<reference key="1">
    <citation type="journal article" date="2003" name="Nature">
        <title>Genome sequence of Bacillus cereus and comparative analysis with Bacillus anthracis.</title>
        <authorList>
            <person name="Ivanova N."/>
            <person name="Sorokin A."/>
            <person name="Anderson I."/>
            <person name="Galleron N."/>
            <person name="Candelon B."/>
            <person name="Kapatral V."/>
            <person name="Bhattacharyya A."/>
            <person name="Reznik G."/>
            <person name="Mikhailova N."/>
            <person name="Lapidus A."/>
            <person name="Chu L."/>
            <person name="Mazur M."/>
            <person name="Goltsman E."/>
            <person name="Larsen N."/>
            <person name="D'Souza M."/>
            <person name="Walunas T."/>
            <person name="Grechkin Y."/>
            <person name="Pusch G."/>
            <person name="Haselkorn R."/>
            <person name="Fonstein M."/>
            <person name="Ehrlich S.D."/>
            <person name="Overbeek R."/>
            <person name="Kyrpides N.C."/>
        </authorList>
    </citation>
    <scope>NUCLEOTIDE SEQUENCE [LARGE SCALE GENOMIC DNA]</scope>
    <source>
        <strain>ATCC 14579 / DSM 31 / CCUG 7414 / JCM 2152 / NBRC 15305 / NCIMB 9373 / NCTC 2599 / NRRL B-3711</strain>
    </source>
</reference>
<comment type="similarity">
    <text evidence="1">Belongs to the CinA family.</text>
</comment>
<name>CINA_BACCR</name>
<proteinExistence type="inferred from homology"/>
<feature type="chain" id="PRO_0000156748" description="Putative competence-damage inducible protein">
    <location>
        <begin position="1"/>
        <end position="412"/>
    </location>
</feature>
<accession>Q81A15</accession>
<sequence length="412" mass="45593">MNAEIIAVGTELLLGQIANTNAQFLSEKLASIGINVYYHTVVGDNNKRLQKAIEAAEERADILIFTGGLGPTKDDLTKETIAASLDEELVYDEKALALISNYFKRTGREFTENNKKQALVLNGATVFANDHGMAPGMGVNKNRKSYILLPGPPKEMKPMYVSYVEPFLRNFTTGENIYSRVLRFFGIGESQLEVKVQDLIDGQTNPTIAPLANDGEVTLRLTAKHQNVSEAEKLIQHVEDLILERVGEFFYGYDQEFLHYKAIELLKRKGLTLACAESLTGGLFGNQVTENAGVSSVFKGGVICYHNDVKQYVLRVPEEVLHTDGAVSKECARYLAENVKDVLKADIGISFTGVAGPDASEQKEPGTVFVGLSIKDEPTVVFPLNLSGSRQQIRERTAKYGFYHLYKKLEEI</sequence>
<dbReference type="EMBL" id="AE016877">
    <property type="protein sequence ID" value="AAP10704.1"/>
    <property type="molecule type" value="Genomic_DNA"/>
</dbReference>
<dbReference type="RefSeq" id="NP_833503.1">
    <property type="nucleotide sequence ID" value="NC_004722.1"/>
</dbReference>
<dbReference type="RefSeq" id="WP_000990694.1">
    <property type="nucleotide sequence ID" value="NC_004722.1"/>
</dbReference>
<dbReference type="SMR" id="Q81A15"/>
<dbReference type="STRING" id="226900.BC_3780"/>
<dbReference type="KEGG" id="bce:BC3780"/>
<dbReference type="PATRIC" id="fig|226900.8.peg.3896"/>
<dbReference type="HOGENOM" id="CLU_030805_9_3_9"/>
<dbReference type="Proteomes" id="UP000001417">
    <property type="component" value="Chromosome"/>
</dbReference>
<dbReference type="CDD" id="cd00885">
    <property type="entry name" value="cinA"/>
    <property type="match status" value="1"/>
</dbReference>
<dbReference type="Gene3D" id="3.30.70.2860">
    <property type="match status" value="1"/>
</dbReference>
<dbReference type="Gene3D" id="3.90.950.20">
    <property type="entry name" value="CinA-like"/>
    <property type="match status" value="1"/>
</dbReference>
<dbReference type="Gene3D" id="3.40.980.10">
    <property type="entry name" value="MoaB/Mog-like domain"/>
    <property type="match status" value="1"/>
</dbReference>
<dbReference type="HAMAP" id="MF_00226_B">
    <property type="entry name" value="CinA_B"/>
    <property type="match status" value="1"/>
</dbReference>
<dbReference type="InterPro" id="IPR050101">
    <property type="entry name" value="CinA"/>
</dbReference>
<dbReference type="InterPro" id="IPR036653">
    <property type="entry name" value="CinA-like_C"/>
</dbReference>
<dbReference type="InterPro" id="IPR008136">
    <property type="entry name" value="CinA_C"/>
</dbReference>
<dbReference type="InterPro" id="IPR041424">
    <property type="entry name" value="CinA_KH"/>
</dbReference>
<dbReference type="InterPro" id="IPR008135">
    <property type="entry name" value="Competence-induced_CinA"/>
</dbReference>
<dbReference type="InterPro" id="IPR036425">
    <property type="entry name" value="MoaB/Mog-like_dom_sf"/>
</dbReference>
<dbReference type="InterPro" id="IPR001453">
    <property type="entry name" value="MoaB/Mog_dom"/>
</dbReference>
<dbReference type="NCBIfam" id="TIGR00200">
    <property type="entry name" value="cinA_nterm"/>
    <property type="match status" value="1"/>
</dbReference>
<dbReference type="NCBIfam" id="TIGR00177">
    <property type="entry name" value="molyb_syn"/>
    <property type="match status" value="1"/>
</dbReference>
<dbReference type="NCBIfam" id="TIGR00199">
    <property type="entry name" value="PncC_domain"/>
    <property type="match status" value="1"/>
</dbReference>
<dbReference type="NCBIfam" id="NF001813">
    <property type="entry name" value="PRK00549.1"/>
    <property type="match status" value="1"/>
</dbReference>
<dbReference type="PANTHER" id="PTHR13939">
    <property type="entry name" value="NICOTINAMIDE-NUCLEOTIDE AMIDOHYDROLASE PNCC"/>
    <property type="match status" value="1"/>
</dbReference>
<dbReference type="PANTHER" id="PTHR13939:SF0">
    <property type="entry name" value="NMN AMIDOHYDROLASE-LIKE PROTEIN YFAY"/>
    <property type="match status" value="1"/>
</dbReference>
<dbReference type="Pfam" id="PF02464">
    <property type="entry name" value="CinA"/>
    <property type="match status" value="1"/>
</dbReference>
<dbReference type="Pfam" id="PF18146">
    <property type="entry name" value="CinA_KH"/>
    <property type="match status" value="1"/>
</dbReference>
<dbReference type="Pfam" id="PF00994">
    <property type="entry name" value="MoCF_biosynth"/>
    <property type="match status" value="1"/>
</dbReference>
<dbReference type="PIRSF" id="PIRSF006728">
    <property type="entry name" value="CinA"/>
    <property type="match status" value="1"/>
</dbReference>
<dbReference type="SMART" id="SM00852">
    <property type="entry name" value="MoCF_biosynth"/>
    <property type="match status" value="1"/>
</dbReference>
<dbReference type="SUPFAM" id="SSF142433">
    <property type="entry name" value="CinA-like"/>
    <property type="match status" value="1"/>
</dbReference>
<dbReference type="SUPFAM" id="SSF53218">
    <property type="entry name" value="Molybdenum cofactor biosynthesis proteins"/>
    <property type="match status" value="1"/>
</dbReference>